<proteinExistence type="inferred from homology"/>
<comment type="function">
    <text evidence="1">Catalyzes the N-acylation of UDP-3-O-acylglucosamine using 3-hydroxyacyl-ACP as the acyl donor. Is involved in the biosynthesis of lipid A, a phosphorylated glycolipid that anchors the lipopolysaccharide to the outer membrane of the cell.</text>
</comment>
<comment type="catalytic activity">
    <reaction evidence="1">
        <text>a UDP-3-O-[(3R)-3-hydroxyacyl]-alpha-D-glucosamine + a (3R)-hydroxyacyl-[ACP] = a UDP-2-N,3-O-bis[(3R)-3-hydroxyacyl]-alpha-D-glucosamine + holo-[ACP] + H(+)</text>
        <dbReference type="Rhea" id="RHEA:53836"/>
        <dbReference type="Rhea" id="RHEA-COMP:9685"/>
        <dbReference type="Rhea" id="RHEA-COMP:9945"/>
        <dbReference type="ChEBI" id="CHEBI:15378"/>
        <dbReference type="ChEBI" id="CHEBI:64479"/>
        <dbReference type="ChEBI" id="CHEBI:78827"/>
        <dbReference type="ChEBI" id="CHEBI:137740"/>
        <dbReference type="ChEBI" id="CHEBI:137748"/>
        <dbReference type="EC" id="2.3.1.191"/>
    </reaction>
</comment>
<comment type="pathway">
    <text evidence="1">Bacterial outer membrane biogenesis; LPS lipid A biosynthesis.</text>
</comment>
<comment type="subunit">
    <text evidence="1">Homotrimer.</text>
</comment>
<comment type="similarity">
    <text evidence="1">Belongs to the transferase hexapeptide repeat family. LpxD subfamily.</text>
</comment>
<organism>
    <name type="scientific">Alkalilimnicola ehrlichii (strain ATCC BAA-1101 / DSM 17681 / MLHE-1)</name>
    <dbReference type="NCBI Taxonomy" id="187272"/>
    <lineage>
        <taxon>Bacteria</taxon>
        <taxon>Pseudomonadati</taxon>
        <taxon>Pseudomonadota</taxon>
        <taxon>Gammaproteobacteria</taxon>
        <taxon>Chromatiales</taxon>
        <taxon>Ectothiorhodospiraceae</taxon>
        <taxon>Alkalilimnicola</taxon>
    </lineage>
</organism>
<keyword id="KW-0012">Acyltransferase</keyword>
<keyword id="KW-0441">Lipid A biosynthesis</keyword>
<keyword id="KW-0444">Lipid biosynthesis</keyword>
<keyword id="KW-0443">Lipid metabolism</keyword>
<keyword id="KW-1185">Reference proteome</keyword>
<keyword id="KW-0677">Repeat</keyword>
<keyword id="KW-0808">Transferase</keyword>
<reference key="1">
    <citation type="submission" date="2006-08" db="EMBL/GenBank/DDBJ databases">
        <title>Complete sequence of Alkalilimnicola ehrilichei MLHE-1.</title>
        <authorList>
            <person name="Copeland A."/>
            <person name="Lucas S."/>
            <person name="Lapidus A."/>
            <person name="Barry K."/>
            <person name="Detter J.C."/>
            <person name="Glavina del Rio T."/>
            <person name="Hammon N."/>
            <person name="Israni S."/>
            <person name="Dalin E."/>
            <person name="Tice H."/>
            <person name="Pitluck S."/>
            <person name="Sims D."/>
            <person name="Brettin T."/>
            <person name="Bruce D."/>
            <person name="Han C."/>
            <person name="Tapia R."/>
            <person name="Gilna P."/>
            <person name="Schmutz J."/>
            <person name="Larimer F."/>
            <person name="Land M."/>
            <person name="Hauser L."/>
            <person name="Kyrpides N."/>
            <person name="Mikhailova N."/>
            <person name="Oremland R.S."/>
            <person name="Hoeft S.E."/>
            <person name="Switzer-Blum J."/>
            <person name="Kulp T."/>
            <person name="King G."/>
            <person name="Tabita R."/>
            <person name="Witte B."/>
            <person name="Santini J.M."/>
            <person name="Basu P."/>
            <person name="Hollibaugh J.T."/>
            <person name="Xie G."/>
            <person name="Stolz J.F."/>
            <person name="Richardson P."/>
        </authorList>
    </citation>
    <scope>NUCLEOTIDE SEQUENCE [LARGE SCALE GENOMIC DNA]</scope>
    <source>
        <strain>ATCC BAA-1101 / DSM 17681 / MLHE-1</strain>
    </source>
</reference>
<dbReference type="EC" id="2.3.1.191" evidence="1"/>
<dbReference type="EMBL" id="CP000453">
    <property type="protein sequence ID" value="ABI58061.1"/>
    <property type="molecule type" value="Genomic_DNA"/>
</dbReference>
<dbReference type="RefSeq" id="WP_011630454.1">
    <property type="nucleotide sequence ID" value="NC_008340.1"/>
</dbReference>
<dbReference type="SMR" id="Q0A526"/>
<dbReference type="KEGG" id="aeh:Mlg_2721"/>
<dbReference type="eggNOG" id="COG1044">
    <property type="taxonomic scope" value="Bacteria"/>
</dbReference>
<dbReference type="HOGENOM" id="CLU_049865_0_1_6"/>
<dbReference type="OrthoDB" id="9784739at2"/>
<dbReference type="UniPathway" id="UPA00973"/>
<dbReference type="Proteomes" id="UP000001962">
    <property type="component" value="Chromosome"/>
</dbReference>
<dbReference type="GO" id="GO:0016020">
    <property type="term" value="C:membrane"/>
    <property type="evidence" value="ECO:0007669"/>
    <property type="project" value="GOC"/>
</dbReference>
<dbReference type="GO" id="GO:0016410">
    <property type="term" value="F:N-acyltransferase activity"/>
    <property type="evidence" value="ECO:0007669"/>
    <property type="project" value="InterPro"/>
</dbReference>
<dbReference type="GO" id="GO:0009245">
    <property type="term" value="P:lipid A biosynthetic process"/>
    <property type="evidence" value="ECO:0007669"/>
    <property type="project" value="UniProtKB-UniRule"/>
</dbReference>
<dbReference type="CDD" id="cd03352">
    <property type="entry name" value="LbH_LpxD"/>
    <property type="match status" value="1"/>
</dbReference>
<dbReference type="Gene3D" id="1.20.5.170">
    <property type="match status" value="1"/>
</dbReference>
<dbReference type="Gene3D" id="2.160.10.10">
    <property type="entry name" value="Hexapeptide repeat proteins"/>
    <property type="match status" value="1"/>
</dbReference>
<dbReference type="Gene3D" id="3.40.1390.10">
    <property type="entry name" value="MurE/MurF, N-terminal domain"/>
    <property type="match status" value="1"/>
</dbReference>
<dbReference type="HAMAP" id="MF_00523">
    <property type="entry name" value="LpxD"/>
    <property type="match status" value="1"/>
</dbReference>
<dbReference type="InterPro" id="IPR001451">
    <property type="entry name" value="Hexapep"/>
</dbReference>
<dbReference type="InterPro" id="IPR007691">
    <property type="entry name" value="LpxD"/>
</dbReference>
<dbReference type="InterPro" id="IPR011004">
    <property type="entry name" value="Trimer_LpxA-like_sf"/>
</dbReference>
<dbReference type="InterPro" id="IPR020573">
    <property type="entry name" value="UDP_GlcNAc_AcTrfase_non-rep"/>
</dbReference>
<dbReference type="NCBIfam" id="TIGR01853">
    <property type="entry name" value="lipid_A_lpxD"/>
    <property type="match status" value="1"/>
</dbReference>
<dbReference type="NCBIfam" id="NF002060">
    <property type="entry name" value="PRK00892.1"/>
    <property type="match status" value="1"/>
</dbReference>
<dbReference type="PANTHER" id="PTHR43378">
    <property type="entry name" value="UDP-3-O-ACYLGLUCOSAMINE N-ACYLTRANSFERASE"/>
    <property type="match status" value="1"/>
</dbReference>
<dbReference type="PANTHER" id="PTHR43378:SF2">
    <property type="entry name" value="UDP-3-O-ACYLGLUCOSAMINE N-ACYLTRANSFERASE 1, MITOCHONDRIAL-RELATED"/>
    <property type="match status" value="1"/>
</dbReference>
<dbReference type="Pfam" id="PF00132">
    <property type="entry name" value="Hexapep"/>
    <property type="match status" value="1"/>
</dbReference>
<dbReference type="Pfam" id="PF04613">
    <property type="entry name" value="LpxD"/>
    <property type="match status" value="1"/>
</dbReference>
<dbReference type="SUPFAM" id="SSF51161">
    <property type="entry name" value="Trimeric LpxA-like enzymes"/>
    <property type="match status" value="1"/>
</dbReference>
<dbReference type="PROSITE" id="PS00101">
    <property type="entry name" value="HEXAPEP_TRANSFERASES"/>
    <property type="match status" value="1"/>
</dbReference>
<accession>Q0A526</accession>
<protein>
    <recommendedName>
        <fullName evidence="1">UDP-3-O-acylglucosamine N-acyltransferase</fullName>
        <ecNumber evidence="1">2.3.1.191</ecNumber>
    </recommendedName>
</protein>
<name>LPXD_ALKEH</name>
<sequence>MTETVTVSELAEGLGAELVGKPTRVIRRVATLCDAGPDAIGFCSNANYLEDLRATGAGAVIVRAEHVAECPTTALVVDDPYYAYAAVATRLHPAERPPAGVHPTAVVAEGVTLGEAVSVGPHAVVEAGARLGARTIVGPGCHVGTGVEIGEDSHLMGRVTVADRCVVGCRVILHPGVVVGADGFGFAKGPGKAGWRKVPQLGRVILGDDVDLGANTTVDRGAIDDTVLEEGVKLDNQVHIGHNVRVGARTIIAGNTVVAGSTTIGCDCMIGGSSAITGHISIADGVILMGMTGVTGSIKQPGAYASPLPAKPVREWRRNSVRFTQLDDLFRRVKRLEAAQSTGEGDGGDDGD</sequence>
<feature type="chain" id="PRO_0000264343" description="UDP-3-O-acylglucosamine N-acyltransferase">
    <location>
        <begin position="1"/>
        <end position="352"/>
    </location>
</feature>
<feature type="active site" description="Proton acceptor" evidence="1">
    <location>
        <position position="242"/>
    </location>
</feature>
<evidence type="ECO:0000255" key="1">
    <source>
        <dbReference type="HAMAP-Rule" id="MF_00523"/>
    </source>
</evidence>
<gene>
    <name evidence="1" type="primary">lpxD</name>
    <name type="ordered locus">Mlg_2721</name>
</gene>